<dbReference type="EC" id="2.3.1.180" evidence="1 3"/>
<dbReference type="EC" id="2.3.1.300" evidence="3"/>
<dbReference type="EMBL" id="L43074">
    <property type="protein sequence ID" value="AAA99447.1"/>
    <property type="molecule type" value="Genomic_DNA"/>
</dbReference>
<dbReference type="PIR" id="T11212">
    <property type="entry name" value="T11212"/>
</dbReference>
<dbReference type="RefSeq" id="WP_043500561.1">
    <property type="nucleotide sequence ID" value="NZ_CP009438.1"/>
</dbReference>
<dbReference type="SMR" id="Q54206"/>
<dbReference type="STRING" id="1907.SGLAU_10970"/>
<dbReference type="KEGG" id="ag:AAA99447"/>
<dbReference type="eggNOG" id="COG0332">
    <property type="taxonomic scope" value="Bacteria"/>
</dbReference>
<dbReference type="OrthoDB" id="9815506at2"/>
<dbReference type="BRENDA" id="2.3.1.300">
    <property type="organism ID" value="6020"/>
</dbReference>
<dbReference type="UniPathway" id="UPA00094"/>
<dbReference type="GO" id="GO:0005737">
    <property type="term" value="C:cytoplasm"/>
    <property type="evidence" value="ECO:0007669"/>
    <property type="project" value="UniProtKB-SubCell"/>
</dbReference>
<dbReference type="GO" id="GO:0004315">
    <property type="term" value="F:3-oxoacyl-[acyl-carrier-protein] synthase activity"/>
    <property type="evidence" value="ECO:0007669"/>
    <property type="project" value="InterPro"/>
</dbReference>
<dbReference type="GO" id="GO:0033818">
    <property type="term" value="F:beta-ketoacyl-acyl-carrier-protein synthase III activity"/>
    <property type="evidence" value="ECO:0007669"/>
    <property type="project" value="UniProtKB-UniRule"/>
</dbReference>
<dbReference type="GO" id="GO:0006633">
    <property type="term" value="P:fatty acid biosynthetic process"/>
    <property type="evidence" value="ECO:0007669"/>
    <property type="project" value="UniProtKB-UniRule"/>
</dbReference>
<dbReference type="GO" id="GO:0044550">
    <property type="term" value="P:secondary metabolite biosynthetic process"/>
    <property type="evidence" value="ECO:0007669"/>
    <property type="project" value="TreeGrafter"/>
</dbReference>
<dbReference type="CDD" id="cd00830">
    <property type="entry name" value="KAS_III"/>
    <property type="match status" value="1"/>
</dbReference>
<dbReference type="Gene3D" id="3.40.47.10">
    <property type="match status" value="2"/>
</dbReference>
<dbReference type="HAMAP" id="MF_01815">
    <property type="entry name" value="FabH"/>
    <property type="match status" value="1"/>
</dbReference>
<dbReference type="InterPro" id="IPR013747">
    <property type="entry name" value="ACP_syn_III_C"/>
</dbReference>
<dbReference type="InterPro" id="IPR013751">
    <property type="entry name" value="ACP_syn_III_N"/>
</dbReference>
<dbReference type="InterPro" id="IPR004655">
    <property type="entry name" value="FabH"/>
</dbReference>
<dbReference type="InterPro" id="IPR016039">
    <property type="entry name" value="Thiolase-like"/>
</dbReference>
<dbReference type="NCBIfam" id="TIGR00747">
    <property type="entry name" value="fabH"/>
    <property type="match status" value="1"/>
</dbReference>
<dbReference type="NCBIfam" id="NF006829">
    <property type="entry name" value="PRK09352.1"/>
    <property type="match status" value="1"/>
</dbReference>
<dbReference type="PANTHER" id="PTHR34069">
    <property type="entry name" value="3-OXOACYL-[ACYL-CARRIER-PROTEIN] SYNTHASE 3"/>
    <property type="match status" value="1"/>
</dbReference>
<dbReference type="PANTHER" id="PTHR34069:SF2">
    <property type="entry name" value="BETA-KETOACYL-[ACYL-CARRIER-PROTEIN] SYNTHASE III"/>
    <property type="match status" value="1"/>
</dbReference>
<dbReference type="Pfam" id="PF08545">
    <property type="entry name" value="ACP_syn_III"/>
    <property type="match status" value="1"/>
</dbReference>
<dbReference type="Pfam" id="PF08541">
    <property type="entry name" value="ACP_syn_III_C"/>
    <property type="match status" value="1"/>
</dbReference>
<dbReference type="SUPFAM" id="SSF53901">
    <property type="entry name" value="Thiolase-like"/>
    <property type="match status" value="1"/>
</dbReference>
<feature type="chain" id="PRO_0000110488" description="Beta-ketoacyl-[acyl-carrier-protein] synthase III">
    <location>
        <begin position="1"/>
        <end position="333"/>
    </location>
</feature>
<feature type="region of interest" description="ACP-binding" evidence="1">
    <location>
        <begin position="259"/>
        <end position="263"/>
    </location>
</feature>
<feature type="active site" evidence="1">
    <location>
        <position position="122"/>
    </location>
</feature>
<feature type="active site" evidence="1">
    <location>
        <position position="258"/>
    </location>
</feature>
<feature type="active site" evidence="1">
    <location>
        <position position="289"/>
    </location>
</feature>
<comment type="function">
    <text evidence="2 3">Catalyzes the condensation reaction of fatty acid synthesis by the addition to an acyl acceptor of two carbons from malonyl-ACP. Catalyzes the first condensation reaction which initiates fatty acid synthesis and may therefore play a role in governing the total rate of fatty acid production. Possesses both acetoacetyl-ACP synthase and acetyl transacylase activities (PubMed:9721286). Utilizes both straight and branched-chain acyl-CoAs (PubMed:9721286). The order of reactivity with the various acyl-CoA substrates at saturation is butanoyl-CoA &gt; acetyl-CoA &gt; 2-methylpropanoyl-CoA (or isobutyryl-CoA) (PubMed:9721286). Not involved in tetracenomycin C (TCM C) biosynthesis (PubMed:12173933).</text>
</comment>
<comment type="catalytic activity">
    <reaction evidence="3">
        <text>butanoyl-CoA + malonyl-[ACP] + H(+) = 3-oxohexanoyl-[ACP] + CO2 + CoA</text>
        <dbReference type="Rhea" id="RHEA:42248"/>
        <dbReference type="Rhea" id="RHEA-COMP:9623"/>
        <dbReference type="Rhea" id="RHEA-COMP:9629"/>
        <dbReference type="ChEBI" id="CHEBI:15378"/>
        <dbReference type="ChEBI" id="CHEBI:16526"/>
        <dbReference type="ChEBI" id="CHEBI:57287"/>
        <dbReference type="ChEBI" id="CHEBI:57371"/>
        <dbReference type="ChEBI" id="CHEBI:78449"/>
        <dbReference type="ChEBI" id="CHEBI:78456"/>
    </reaction>
    <physiologicalReaction direction="left-to-right" evidence="3">
        <dbReference type="Rhea" id="RHEA:42249"/>
    </physiologicalReaction>
</comment>
<comment type="catalytic activity">
    <reaction evidence="1 3">
        <text>malonyl-[ACP] + acetyl-CoA + H(+) = 3-oxobutanoyl-[ACP] + CO2 + CoA</text>
        <dbReference type="Rhea" id="RHEA:12080"/>
        <dbReference type="Rhea" id="RHEA-COMP:9623"/>
        <dbReference type="Rhea" id="RHEA-COMP:9625"/>
        <dbReference type="ChEBI" id="CHEBI:15378"/>
        <dbReference type="ChEBI" id="CHEBI:16526"/>
        <dbReference type="ChEBI" id="CHEBI:57287"/>
        <dbReference type="ChEBI" id="CHEBI:57288"/>
        <dbReference type="ChEBI" id="CHEBI:78449"/>
        <dbReference type="ChEBI" id="CHEBI:78450"/>
        <dbReference type="EC" id="2.3.1.180"/>
    </reaction>
    <physiologicalReaction direction="left-to-right" evidence="3">
        <dbReference type="Rhea" id="RHEA:12081"/>
    </physiologicalReaction>
</comment>
<comment type="catalytic activity">
    <reaction evidence="3">
        <text>2-methylpropanoyl-CoA + malonyl-[ACP] + H(+) = 4-methyl-3-oxopentanoyl-[ACP] + CO2 + CoA</text>
        <dbReference type="Rhea" id="RHEA:42268"/>
        <dbReference type="Rhea" id="RHEA-COMP:9623"/>
        <dbReference type="Rhea" id="RHEA-COMP:9940"/>
        <dbReference type="ChEBI" id="CHEBI:15378"/>
        <dbReference type="ChEBI" id="CHEBI:16526"/>
        <dbReference type="ChEBI" id="CHEBI:57287"/>
        <dbReference type="ChEBI" id="CHEBI:57338"/>
        <dbReference type="ChEBI" id="CHEBI:78449"/>
        <dbReference type="ChEBI" id="CHEBI:78820"/>
        <dbReference type="EC" id="2.3.1.300"/>
    </reaction>
    <physiologicalReaction direction="left-to-right" evidence="3">
        <dbReference type="Rhea" id="RHEA:42269"/>
    </physiologicalReaction>
</comment>
<comment type="activity regulation">
    <text evidence="3">Inhibited by thiolactomycin.</text>
</comment>
<comment type="biophysicochemical properties">
    <kinetics>
        <KM evidence="3">0.6 uM for butanoyl-CoA</KM>
        <KM evidence="3">3 uM for acetyl-CoA</KM>
        <KM evidence="3">0.4 uM for 2-methylpropanoyl-CoA</KM>
        <KM evidence="3">3.66 uM for malonyl-[ACP]</KM>
        <Vmax evidence="3">20.5 pmol/min/mg enzyme with butanoyl-CoA as substrate</Vmax>
        <Vmax evidence="3">11.5 pmol/min/mg enzyme with acetyl-CoA as substrate</Vmax>
        <Vmax evidence="3">3.4 pmol/min/mg enzyme with 2-methylpropanoyl-CoA as substrate</Vmax>
    </kinetics>
</comment>
<comment type="pathway">
    <text evidence="6">Lipid metabolism; fatty acid biosynthesis.</text>
</comment>
<comment type="subunit">
    <text evidence="1 3">Homodimer.</text>
</comment>
<comment type="subcellular location">
    <subcellularLocation>
        <location evidence="1 5">Cytoplasm</location>
    </subcellularLocation>
</comment>
<comment type="domain">
    <text evidence="1">The last Arg residue of the ACP-binding site is essential for the weak association between ACP/AcpP and FabH.</text>
</comment>
<comment type="similarity">
    <text evidence="1 5">Belongs to the thiolase-like superfamily. FabH family.</text>
</comment>
<keyword id="KW-0012">Acyltransferase</keyword>
<keyword id="KW-0963">Cytoplasm</keyword>
<keyword id="KW-0275">Fatty acid biosynthesis</keyword>
<keyword id="KW-0276">Fatty acid metabolism</keyword>
<keyword id="KW-0444">Lipid biosynthesis</keyword>
<keyword id="KW-0443">Lipid metabolism</keyword>
<keyword id="KW-0511">Multifunctional enzyme</keyword>
<keyword id="KW-0808">Transferase</keyword>
<proteinExistence type="evidence at protein level"/>
<name>FABH_STRGA</name>
<gene>
    <name type="primary">fabH</name>
</gene>
<sequence>MSKIKPAKGAPYARILGVGGYRPTRVVPNEVILETIDSSDEWIRSRSGIQTRHWANDEETVAAMSIEASGKAIADAGITAAQVGAVIVSTVTHFKQTPAVATEIADKLGTNKAAAFDISAGCAGFGYGLTLAKGMIVEGSAEYVLVIGVERLSDLTDLEDRATAFLFGDGAGAVVVGPSNEPAIGPTIWGSEGDKAETIKQTVPWTDYREGGVERFPAITQEGQAVFRWAVFEMAKVAQQALDAAGVAAADLDVFIPHQANERIIDSMVKTLKLPESVTVARDVRTTGNTSAASIPLAMERLLATGEAKSGDTALVIGFGAGLVYAASVVTLP</sequence>
<organism>
    <name type="scientific">Streptomyces glaucescens</name>
    <dbReference type="NCBI Taxonomy" id="1907"/>
    <lineage>
        <taxon>Bacteria</taxon>
        <taxon>Bacillati</taxon>
        <taxon>Actinomycetota</taxon>
        <taxon>Actinomycetes</taxon>
        <taxon>Kitasatosporales</taxon>
        <taxon>Streptomycetaceae</taxon>
        <taxon>Streptomyces</taxon>
    </lineage>
</organism>
<protein>
    <recommendedName>
        <fullName evidence="1 4">Beta-ketoacyl-[acyl-carrier-protein] synthase III</fullName>
        <shortName evidence="1 4">Beta-ketoacyl-ACP synthase III</shortName>
        <shortName evidence="1 4">KAS III</shortName>
        <ecNumber evidence="1 3">2.3.1.180</ecNumber>
        <ecNumber evidence="3">2.3.1.300</ecNumber>
    </recommendedName>
    <alternativeName>
        <fullName evidence="1">3-oxoacyl-[acyl-carrier-protein] synthase 3</fullName>
    </alternativeName>
    <alternativeName>
        <fullName evidence="1">3-oxoacyl-[acyl-carrier-protein] synthase III</fullName>
    </alternativeName>
    <alternativeName>
        <fullName evidence="5">Branched-chain beta-ketoacyl-[acyl-carrier-protein] synthase</fullName>
    </alternativeName>
    <alternativeName>
        <fullName>SgFabH</fullName>
    </alternativeName>
</protein>
<accession>Q54206</accession>
<reference key="1">
    <citation type="journal article" date="1995" name="Biochemistry">
        <title>Malonyl-coenzyme A:acyl carrier protein acyltransferase of Streptomyces glaucescens: a possible link between fatty acid and polyketide biosynthesis.</title>
        <authorList>
            <person name="Summers R.G."/>
            <person name="Ali A."/>
            <person name="Shen B."/>
            <person name="Wessel W.A."/>
            <person name="Hutchinson C.R."/>
        </authorList>
    </citation>
    <scope>NUCLEOTIDE SEQUENCE [GENOMIC DNA]</scope>
    <source>
        <strain>DSM 40716 / ETH 22794 / Tue 49</strain>
    </source>
</reference>
<reference key="2">
    <citation type="journal article" date="1998" name="J. Bacteriol.">
        <title>Characterization of beta-ketoacyl-acyl carrier protein synthase III from Streptomyces glaucescens and its role in initiation of fatty acid biosynthesis.</title>
        <authorList>
            <person name="Han L."/>
            <person name="Lobo S."/>
            <person name="Reynolds K.A."/>
        </authorList>
    </citation>
    <scope>FUNCTION</scope>
    <scope>CATALYTIC ACTIVITY</scope>
    <scope>SUBSTRATE SPECIFICITY</scope>
    <scope>ACTIVITY REGULATION</scope>
    <scope>BIOPHYSICOCHEMICAL PROPERTIES</scope>
    <scope>SUBUNIT</scope>
</reference>
<reference key="3">
    <citation type="journal article" date="2002" name="Biochemistry">
        <title>Enzymes involved in fatty acid and polyketide biosynthesis in Streptomyces glaucescens: role of FabH and FabD and their acyl carrier protein specificity.</title>
        <authorList>
            <person name="Florova G."/>
            <person name="Kazanina G."/>
            <person name="Reynolds K.A."/>
        </authorList>
    </citation>
    <scope>FUNCTION</scope>
</reference>
<evidence type="ECO:0000255" key="1">
    <source>
        <dbReference type="HAMAP-Rule" id="MF_01815"/>
    </source>
</evidence>
<evidence type="ECO:0000269" key="2">
    <source>
    </source>
</evidence>
<evidence type="ECO:0000269" key="3">
    <source>
    </source>
</evidence>
<evidence type="ECO:0000303" key="4">
    <source>
    </source>
</evidence>
<evidence type="ECO:0000305" key="5"/>
<evidence type="ECO:0000305" key="6">
    <source>
    </source>
</evidence>